<gene>
    <name evidence="7" type="primary">cyp105A1</name>
    <name evidence="7" type="synonym">suaC</name>
</gene>
<feature type="initiator methionine" description="Removed" evidence="2 5">
    <location>
        <position position="1"/>
    </location>
</feature>
<feature type="chain" id="PRO_0000052213" description="Vitamin D3 dihydroxylase">
    <location>
        <begin position="2"/>
        <end position="406"/>
    </location>
</feature>
<feature type="region of interest" description="Disordered" evidence="1">
    <location>
        <begin position="1"/>
        <end position="24"/>
    </location>
</feature>
<feature type="compositionally biased region" description="Low complexity" evidence="1">
    <location>
        <begin position="1"/>
        <end position="15"/>
    </location>
</feature>
<feature type="binding site" evidence="4">
    <location>
        <position position="81"/>
    </location>
    <ligand>
        <name>calciol</name>
        <dbReference type="ChEBI" id="CHEBI:28940"/>
    </ligand>
</feature>
<feature type="binding site" evidence="3">
    <location>
        <position position="103"/>
    </location>
    <ligand>
        <name>heme</name>
        <dbReference type="ChEBI" id="CHEBI:30413"/>
    </ligand>
</feature>
<feature type="binding site" evidence="3">
    <location>
        <position position="107"/>
    </location>
    <ligand>
        <name>heme</name>
        <dbReference type="ChEBI" id="CHEBI:30413"/>
    </ligand>
</feature>
<feature type="binding site" evidence="3 4">
    <location>
        <position position="193"/>
    </location>
    <ligand>
        <name>calciol</name>
        <dbReference type="ChEBI" id="CHEBI:28940"/>
    </ligand>
</feature>
<feature type="binding site" evidence="3">
    <location>
        <position position="236"/>
    </location>
    <ligand>
        <name>calciol</name>
        <dbReference type="ChEBI" id="CHEBI:28940"/>
    </ligand>
</feature>
<feature type="binding site" evidence="3 4">
    <location>
        <position position="293"/>
    </location>
    <ligand>
        <name>calciol</name>
        <dbReference type="ChEBI" id="CHEBI:28940"/>
    </ligand>
</feature>
<feature type="binding site" evidence="3">
    <location>
        <position position="297"/>
    </location>
    <ligand>
        <name>heme</name>
        <dbReference type="ChEBI" id="CHEBI:30413"/>
    </ligand>
</feature>
<feature type="binding site" evidence="3">
    <location>
        <position position="353"/>
    </location>
    <ligand>
        <name>heme</name>
        <dbReference type="ChEBI" id="CHEBI:30413"/>
    </ligand>
</feature>
<feature type="binding site" description="axial binding residue" evidence="3">
    <location>
        <position position="355"/>
    </location>
    <ligand>
        <name>heme</name>
        <dbReference type="ChEBI" id="CHEBI:30413"/>
    </ligand>
    <ligandPart>
        <name>Fe</name>
        <dbReference type="ChEBI" id="CHEBI:18248"/>
    </ligandPart>
</feature>
<feature type="mutagenesis site" description="Increase of the hydroxylase activity and decrease of affinity for both 25-hydroxyvitamin D3 and 1-alpha-hydroxyvitamin D3. Increase of the hydroxylase activity; when associated with A-84 and F-84." evidence="3 4">
    <original>R</original>
    <variation>A</variation>
    <variation>F</variation>
    <variation>L</variation>
    <variation>V</variation>
    <location>
        <position position="73"/>
    </location>
</feature>
<feature type="mutagenesis site" description="Increase of the hydroxylase activity and decrease of affinity for both 25-hydroxyvitamin D3 and 1-alpha-hydroxyvitamin D3. Increase of the hydroxylase activity; when associated with A-73 and V-73." evidence="3">
    <original>R</original>
    <variation>A</variation>
    <variation>Q</variation>
    <variation>L</variation>
    <variation>F</variation>
    <location>
        <position position="84"/>
    </location>
</feature>
<feature type="mutagenesis site" description="Alters the substrate specificity that gives preference to the 1-alpha-hydroxylation of 25-hydroxyvitamin D3 over the 25-hydroxylation of 1-alpha-hydroxyvitamin D3. Increase of the hydroxylase activity and decrease of affinity for both 25-hydroxyvitamin D3 and 1-alpha-hydroxyvitamin D3." evidence="4">
    <original>R</original>
    <variation>F</variation>
    <location>
        <position position="84"/>
    </location>
</feature>
<feature type="mutagenesis site" description="Decrease of the hydroxylase activity for both 25-hydroxyivitamin D3 and 1-alpha-hydroxyvitamin D3." evidence="3">
    <original>V</original>
    <variation>A</variation>
    <location>
        <position position="88"/>
    </location>
</feature>
<feature type="mutagenesis site" description="Decrease of the hydroxylase activity for both 25-hydroxyvitamin D3 and 1-alpha-hydroxyvitamin D3." evidence="3">
    <original>L</original>
    <variation>A</variation>
    <location>
        <position position="180"/>
    </location>
</feature>
<feature type="mutagenesis site" description="Decrease of the hydroxylase activity for both 25-hydroxyvitamin D3 and 1-alpha-hydroxyvitamin D3." evidence="3">
    <original>V</original>
    <variation>A</variation>
    <location>
        <position position="181"/>
    </location>
</feature>
<feature type="mutagenesis site" description="Decrease of the hydroxylase activity." evidence="3">
    <original>R</original>
    <variation>A</variation>
    <variation>Q</variation>
    <variation>K</variation>
    <location>
        <position position="193"/>
    </location>
</feature>
<feature type="mutagenesis site" description="Slight increase of the hydroxylase activity." evidence="3">
    <original>I</original>
    <variation>A</variation>
    <location>
        <position position="293"/>
    </location>
</feature>
<feature type="strand" evidence="9">
    <location>
        <begin position="15"/>
        <end position="17"/>
    </location>
</feature>
<feature type="helix" evidence="9">
    <location>
        <begin position="28"/>
        <end position="35"/>
    </location>
</feature>
<feature type="strand" evidence="9">
    <location>
        <begin position="36"/>
        <end position="44"/>
    </location>
</feature>
<feature type="strand" evidence="9">
    <location>
        <begin position="50"/>
        <end position="54"/>
    </location>
</feature>
<feature type="helix" evidence="9">
    <location>
        <begin position="57"/>
        <end position="64"/>
    </location>
</feature>
<feature type="helix" evidence="9">
    <location>
        <begin position="83"/>
        <end position="85"/>
    </location>
</feature>
<feature type="turn" evidence="10">
    <location>
        <begin position="88"/>
        <end position="90"/>
    </location>
</feature>
<feature type="helix" evidence="9">
    <location>
        <begin position="95"/>
        <end position="97"/>
    </location>
</feature>
<feature type="helix" evidence="9">
    <location>
        <begin position="102"/>
        <end position="107"/>
    </location>
</feature>
<feature type="turn" evidence="9">
    <location>
        <begin position="108"/>
        <end position="110"/>
    </location>
</feature>
<feature type="helix" evidence="9">
    <location>
        <begin position="111"/>
        <end position="114"/>
    </location>
</feature>
<feature type="helix" evidence="9">
    <location>
        <begin position="116"/>
        <end position="140"/>
    </location>
</feature>
<feature type="strand" evidence="10">
    <location>
        <begin position="142"/>
        <end position="145"/>
    </location>
</feature>
<feature type="helix" evidence="9">
    <location>
        <begin position="146"/>
        <end position="149"/>
    </location>
</feature>
<feature type="turn" evidence="9">
    <location>
        <begin position="150"/>
        <end position="152"/>
    </location>
</feature>
<feature type="helix" evidence="9">
    <location>
        <begin position="153"/>
        <end position="163"/>
    </location>
</feature>
<feature type="helix" evidence="9">
    <location>
        <begin position="167"/>
        <end position="169"/>
    </location>
</feature>
<feature type="helix" evidence="9">
    <location>
        <begin position="170"/>
        <end position="182"/>
    </location>
</feature>
<feature type="helix" evidence="9">
    <location>
        <begin position="186"/>
        <end position="209"/>
    </location>
</feature>
<feature type="helix" evidence="9">
    <location>
        <begin position="215"/>
        <end position="221"/>
    </location>
</feature>
<feature type="turn" evidence="9">
    <location>
        <begin position="222"/>
        <end position="227"/>
    </location>
</feature>
<feature type="helix" evidence="9">
    <location>
        <begin position="231"/>
        <end position="261"/>
    </location>
</feature>
<feature type="helix" evidence="9">
    <location>
        <begin position="264"/>
        <end position="272"/>
    </location>
</feature>
<feature type="helix" evidence="9">
    <location>
        <begin position="274"/>
        <end position="276"/>
    </location>
</feature>
<feature type="helix" evidence="9">
    <location>
        <begin position="277"/>
        <end position="288"/>
    </location>
</feature>
<feature type="helix" evidence="9">
    <location>
        <begin position="292"/>
        <end position="294"/>
    </location>
</feature>
<feature type="strand" evidence="9">
    <location>
        <begin position="296"/>
        <end position="301"/>
    </location>
</feature>
<feature type="strand" evidence="9">
    <location>
        <begin position="303"/>
        <end position="305"/>
    </location>
</feature>
<feature type="strand" evidence="9">
    <location>
        <begin position="308"/>
        <end position="310"/>
    </location>
</feature>
<feature type="strand" evidence="9">
    <location>
        <begin position="315"/>
        <end position="318"/>
    </location>
</feature>
<feature type="helix" evidence="9">
    <location>
        <begin position="320"/>
        <end position="323"/>
    </location>
</feature>
<feature type="turn" evidence="9">
    <location>
        <begin position="327"/>
        <end position="329"/>
    </location>
</feature>
<feature type="strand" evidence="9">
    <location>
        <begin position="330"/>
        <end position="332"/>
    </location>
</feature>
<feature type="helix" evidence="9">
    <location>
        <begin position="358"/>
        <end position="375"/>
    </location>
</feature>
<feature type="strand" evidence="9">
    <location>
        <begin position="380"/>
        <end position="383"/>
    </location>
</feature>
<feature type="helix" evidence="9">
    <location>
        <begin position="385"/>
        <end position="387"/>
    </location>
</feature>
<feature type="strand" evidence="11">
    <location>
        <begin position="398"/>
        <end position="400"/>
    </location>
</feature>
<feature type="strand" evidence="9">
    <location>
        <begin position="403"/>
        <end position="405"/>
    </location>
</feature>
<dbReference type="EC" id="1.14.15.22" evidence="2 3 4"/>
<dbReference type="EMBL" id="M32238">
    <property type="protein sequence ID" value="AAA26823.1"/>
    <property type="molecule type" value="Genomic_DNA"/>
</dbReference>
<dbReference type="PIR" id="A35401">
    <property type="entry name" value="A35401"/>
</dbReference>
<dbReference type="PDB" id="2ZBX">
    <property type="method" value="X-ray"/>
    <property type="resolution" value="1.50 A"/>
    <property type="chains" value="A=1-406"/>
</dbReference>
<dbReference type="PDB" id="2ZBY">
    <property type="method" value="X-ray"/>
    <property type="resolution" value="1.60 A"/>
    <property type="chains" value="A=1-406"/>
</dbReference>
<dbReference type="PDB" id="2ZBZ">
    <property type="method" value="X-ray"/>
    <property type="resolution" value="1.90 A"/>
    <property type="chains" value="A=1-406"/>
</dbReference>
<dbReference type="PDB" id="3CV8">
    <property type="method" value="X-ray"/>
    <property type="resolution" value="2.00 A"/>
    <property type="chains" value="A=1-406"/>
</dbReference>
<dbReference type="PDB" id="3CV9">
    <property type="method" value="X-ray"/>
    <property type="resolution" value="1.70 A"/>
    <property type="chains" value="A=1-406"/>
</dbReference>
<dbReference type="PDB" id="5X7E">
    <property type="method" value="X-ray"/>
    <property type="resolution" value="1.90 A"/>
    <property type="chains" value="A=1-406"/>
</dbReference>
<dbReference type="PDBsum" id="2ZBX"/>
<dbReference type="PDBsum" id="2ZBY"/>
<dbReference type="PDBsum" id="2ZBZ"/>
<dbReference type="PDBsum" id="3CV8"/>
<dbReference type="PDBsum" id="3CV9"/>
<dbReference type="PDBsum" id="5X7E"/>
<dbReference type="SMR" id="P18326"/>
<dbReference type="KEGG" id="ag:AAA26823"/>
<dbReference type="BRENDA" id="1.14.15.22">
    <property type="organism ID" value="6031"/>
</dbReference>
<dbReference type="EvolutionaryTrace" id="P18326"/>
<dbReference type="GO" id="GO:0005737">
    <property type="term" value="C:cytoplasm"/>
    <property type="evidence" value="ECO:0000314"/>
    <property type="project" value="UniProtKB"/>
</dbReference>
<dbReference type="GO" id="GO:0020037">
    <property type="term" value="F:heme binding"/>
    <property type="evidence" value="ECO:0000314"/>
    <property type="project" value="UniProtKB"/>
</dbReference>
<dbReference type="GO" id="GO:0005506">
    <property type="term" value="F:iron ion binding"/>
    <property type="evidence" value="ECO:0007669"/>
    <property type="project" value="InterPro"/>
</dbReference>
<dbReference type="GO" id="GO:0016709">
    <property type="term" value="F:oxidoreductase activity, acting on paired donors, with incorporation or reduction of molecular oxygen, NAD(P)H as one donor, and incorporation of one atom of oxygen"/>
    <property type="evidence" value="ECO:0000314"/>
    <property type="project" value="UniProtKB"/>
</dbReference>
<dbReference type="GO" id="GO:0070640">
    <property type="term" value="P:vitamin D3 metabolic process"/>
    <property type="evidence" value="ECO:0000314"/>
    <property type="project" value="UniProtKB"/>
</dbReference>
<dbReference type="CDD" id="cd11030">
    <property type="entry name" value="CYP105-like"/>
    <property type="match status" value="1"/>
</dbReference>
<dbReference type="FunFam" id="1.10.630.10:FF:000018">
    <property type="entry name" value="Cytochrome P450 monooxygenase"/>
    <property type="match status" value="1"/>
</dbReference>
<dbReference type="Gene3D" id="1.10.630.10">
    <property type="entry name" value="Cytochrome P450"/>
    <property type="match status" value="1"/>
</dbReference>
<dbReference type="InterPro" id="IPR001128">
    <property type="entry name" value="Cyt_P450"/>
</dbReference>
<dbReference type="InterPro" id="IPR002397">
    <property type="entry name" value="Cyt_P450_B"/>
</dbReference>
<dbReference type="InterPro" id="IPR017972">
    <property type="entry name" value="Cyt_P450_CS"/>
</dbReference>
<dbReference type="InterPro" id="IPR036396">
    <property type="entry name" value="Cyt_P450_sf"/>
</dbReference>
<dbReference type="PANTHER" id="PTHR46696:SF1">
    <property type="entry name" value="CYTOCHROME P450 YJIB-RELATED"/>
    <property type="match status" value="1"/>
</dbReference>
<dbReference type="PANTHER" id="PTHR46696">
    <property type="entry name" value="P450, PUTATIVE (EUROFUNG)-RELATED"/>
    <property type="match status" value="1"/>
</dbReference>
<dbReference type="Pfam" id="PF00067">
    <property type="entry name" value="p450"/>
    <property type="match status" value="1"/>
</dbReference>
<dbReference type="PRINTS" id="PR00359">
    <property type="entry name" value="BP450"/>
</dbReference>
<dbReference type="PRINTS" id="PR00385">
    <property type="entry name" value="P450"/>
</dbReference>
<dbReference type="SUPFAM" id="SSF48264">
    <property type="entry name" value="Cytochrome P450"/>
    <property type="match status" value="1"/>
</dbReference>
<dbReference type="PROSITE" id="PS00086">
    <property type="entry name" value="CYTOCHROME_P450"/>
    <property type="match status" value="1"/>
</dbReference>
<evidence type="ECO:0000256" key="1">
    <source>
        <dbReference type="SAM" id="MobiDB-lite"/>
    </source>
</evidence>
<evidence type="ECO:0000269" key="2">
    <source>
    </source>
</evidence>
<evidence type="ECO:0000269" key="3">
    <source>
    </source>
</evidence>
<evidence type="ECO:0000269" key="4">
    <source>
    </source>
</evidence>
<evidence type="ECO:0000269" key="5">
    <source>
    </source>
</evidence>
<evidence type="ECO:0000303" key="6">
    <source>
    </source>
</evidence>
<evidence type="ECO:0000303" key="7">
    <source>
    </source>
</evidence>
<evidence type="ECO:0000305" key="8"/>
<evidence type="ECO:0007829" key="9">
    <source>
        <dbReference type="PDB" id="2ZBX"/>
    </source>
</evidence>
<evidence type="ECO:0007829" key="10">
    <source>
        <dbReference type="PDB" id="2ZBY"/>
    </source>
</evidence>
<evidence type="ECO:0007829" key="11">
    <source>
        <dbReference type="PDB" id="3CV9"/>
    </source>
</evidence>
<organism>
    <name type="scientific">Streptomyces griseolus</name>
    <dbReference type="NCBI Taxonomy" id="1909"/>
    <lineage>
        <taxon>Bacteria</taxon>
        <taxon>Bacillati</taxon>
        <taxon>Actinomycetota</taxon>
        <taxon>Actinomycetes</taxon>
        <taxon>Kitasatosporales</taxon>
        <taxon>Streptomycetaceae</taxon>
        <taxon>Streptomyces</taxon>
    </lineage>
</organism>
<name>CPXE_STRGO</name>
<comment type="function">
    <text evidence="2 3 4">Involved in the metabolism of vitamin D3 (calciol) and of a number of sulfonylurea herbicides. Catalyzes the two-step hydroxylation (25- and 1-alpha-hydroxylation) of vitamin D3 (VD3) to yield its active form 1-alpha,25-dihydroxyvitamin D3 (calcitriol). The first step is the hydroxylation of the C-25 position of VD3 to produce 25-hydroxyvitamin D3 (calcidiol). The second reaction is the hydroxylation of the C1-alpha-position of calcidiol to produce calcitriol. It can also hydroxylate vitamin D2.</text>
</comment>
<comment type="catalytic activity">
    <reaction evidence="2 3 4">
        <text>calciol + 2 reduced [2Fe-2S]-[ferredoxin] + O2 + 2 H(+) = calcidiol + 2 oxidized [2Fe-2S]-[ferredoxin] + H2O</text>
        <dbReference type="Rhea" id="RHEA:50696"/>
        <dbReference type="Rhea" id="RHEA-COMP:10000"/>
        <dbReference type="Rhea" id="RHEA-COMP:10001"/>
        <dbReference type="ChEBI" id="CHEBI:15377"/>
        <dbReference type="ChEBI" id="CHEBI:15378"/>
        <dbReference type="ChEBI" id="CHEBI:15379"/>
        <dbReference type="ChEBI" id="CHEBI:17933"/>
        <dbReference type="ChEBI" id="CHEBI:28940"/>
        <dbReference type="ChEBI" id="CHEBI:33737"/>
        <dbReference type="ChEBI" id="CHEBI:33738"/>
        <dbReference type="EC" id="1.14.15.22"/>
    </reaction>
</comment>
<comment type="catalytic activity">
    <reaction evidence="2 3 4">
        <text>calcidiol + 2 reduced [2Fe-2S]-[ferredoxin] + O2 + 2 H(+) = calcitriol + 2 oxidized [2Fe-2S]-[ferredoxin] + H2O</text>
        <dbReference type="Rhea" id="RHEA:50700"/>
        <dbReference type="Rhea" id="RHEA-COMP:10000"/>
        <dbReference type="Rhea" id="RHEA-COMP:10001"/>
        <dbReference type="ChEBI" id="CHEBI:15377"/>
        <dbReference type="ChEBI" id="CHEBI:15378"/>
        <dbReference type="ChEBI" id="CHEBI:15379"/>
        <dbReference type="ChEBI" id="CHEBI:17823"/>
        <dbReference type="ChEBI" id="CHEBI:17933"/>
        <dbReference type="ChEBI" id="CHEBI:33737"/>
        <dbReference type="ChEBI" id="CHEBI:33738"/>
        <dbReference type="EC" id="1.14.15.22"/>
    </reaction>
</comment>
<comment type="cofactor">
    <cofactor evidence="2 3 4">
        <name>heme</name>
        <dbReference type="ChEBI" id="CHEBI:30413"/>
    </cofactor>
</comment>
<comment type="biophysicochemical properties">
    <kinetics>
        <KM evidence="2">0.54 uM for vitamin D3 (at pH 7.4 and 30 degrees Celsius)</KM>
        <KM evidence="2">0.59 uM for vitamin D2 (at pH 7.4 and 30 degrees Celsius)</KM>
        <KM evidence="2">0.91 uM for 25-hydroxyvitamin D3 (1-alpha-hydroxylation)(at pH 7.4 and 30 degrees Celsius)</KM>
        <KM evidence="4">4.4 uM for 25-hydroxyvitamin D3 (1-alpha-hydroxylation)</KM>
        <KM evidence="3">5 uM for 25-hydroxyvitamin D3 (1-alpha-hydroxylation)</KM>
        <KM evidence="3">9.4 uM for 1-alpha-hydroxyvitamin D3 (25-alpha-hydroxylation)</KM>
        <KM evidence="4">10.1 uM for 1-alpha-hydroxyvitamin D3 (25-alpha-hydroxylation)</KM>
        <Vmax evidence="3">8.4 umol/min/mg enzyme with 25-hydroxyvitamin D3 as substrate (1-alpha-hydroxylation)</Vmax>
        <Vmax evidence="3">3.8 umol/min/mg enzyme with as 1-alpha-hydroxyvitamin D3 substrate (25-alpha-hydroxylation)</Vmax>
        <Vmax evidence="2">3.6 mmol/min/mg enzyme with 25-hydroxyvitamin D3 as substrate (1-alpha-hydroxylation)(at pH 7.4 and 30 degrees Celsius)</Vmax>
        <Vmax evidence="2">16.0 mmol/min/mg enzyme with vitamin D3 as substrate (at pH 7.4 and 30 degrees Celsius)</Vmax>
        <Vmax evidence="2">84.0 mmol/min/mg enzyme with vitamin D2 as substrate (at pH 7.4 and 30 degrees Celsius)</Vmax>
        <text evidence="4">kcat is 0.0076 min(-1) for hydroxylase activity with 1-alpha-hydroxyvitamin D3 as substrate. kcat is 0.0026 min(-1) for hydroxylase activity with 25-hydroxyvitamin D3 as substrate.</text>
    </kinetics>
</comment>
<comment type="subcellular location">
    <subcellularLocation>
        <location evidence="2">Cytoplasm</location>
    </subcellularLocation>
</comment>
<comment type="induction">
    <text evidence="5">By herbicides.</text>
</comment>
<comment type="miscellaneous">
    <text evidence="4">Two metabolic pathways exist. One is a conversion of VD3 to 25-hydroxyvitamin D3 and then to 1-alpha,25-dihydroxyvitamin D3 (25-pathway), while the other one is a pathway via 1-alpha-hydroxyvitamin D3 as an intermediate (1-alpha-pathway). Analysis show that the amount of 25-hydroxyvitamin D3 is predominant as the product of this reaction, while very small amounts of 1-alpha-hydroxyvitamin D3 and 1-alpha,25-dihydroxyvitamin D3 are obtained, suggesting that the major pathway is the 25-pathway.</text>
</comment>
<comment type="miscellaneous">
    <text evidence="4">The hydrophobicity and the volume of the side chain at position 84 are critical for the activity.</text>
</comment>
<comment type="similarity">
    <text evidence="8">Belongs to the cytochrome P450 family.</text>
</comment>
<proteinExistence type="evidence at protein level"/>
<reference key="1">
    <citation type="journal article" date="1990" name="J. Bacteriol.">
        <title>Genes for two herbicide-inducible cytochromes P-450 from Streptomyces griseolus.</title>
        <authorList>
            <person name="Omer C.A."/>
            <person name="Lenstra R."/>
            <person name="Litle P.J."/>
            <person name="Dean C."/>
            <person name="Tepperman J.M."/>
            <person name="Leto K.J."/>
            <person name="Romesser J.A."/>
            <person name="O'Keefe D.P."/>
        </authorList>
    </citation>
    <scope>NUCLEOTIDE SEQUENCE [GENOMIC DNA]</scope>
    <scope>PROTEIN SEQUENCE OF 2-32</scope>
    <scope>INDUCTION</scope>
    <source>
        <strain>ATCC 11796 / DSM 40854</strain>
    </source>
</reference>
<reference key="2">
    <citation type="journal article" date="2004" name="Biochem. Biophys. Res. Commun.">
        <title>Conversion of vitamin D3 to 1alpha,25-dihydroxyvitamin D3 by Streptomyces griseolus cytochrome P450SU-1.</title>
        <authorList>
            <person name="Sawada N."/>
            <person name="Sakaki T."/>
            <person name="Yoneda S."/>
            <person name="Kusudo T."/>
            <person name="Shinkyo R."/>
            <person name="Ohta M."/>
            <person name="Inouye K."/>
        </authorList>
    </citation>
    <scope>PROTEIN SEQUENCE OF 2-11</scope>
    <scope>FUNCTION</scope>
    <scope>CATALYTIC ACTIVITY</scope>
    <scope>BIOPHYSICOCHEMICAL PROPERTIES</scope>
    <scope>SUBCELLULAR LOCATION</scope>
    <scope>COFACTOR</scope>
    <scope>SUBSTRATE SPECIFICITY</scope>
</reference>
<reference key="3">
    <citation type="journal article" date="2008" name="Biochemistry">
        <title>Crystal structure of CYP105A1 (P450SU-1) in complex with 1alpha,25-dihydroxyvitamin D3.</title>
        <authorList>
            <person name="Sugimoto H."/>
            <person name="Shinkyo R."/>
            <person name="Hayashi K."/>
            <person name="Yoneda S."/>
            <person name="Yamada M."/>
            <person name="Kamakura M."/>
            <person name="Ikushiro S."/>
            <person name="Shiro Y."/>
            <person name="Sakaki T."/>
        </authorList>
    </citation>
    <scope>X-RAY CRYSTALLOGRAPHY (1.50 ANGSTROMS) OF WILD-TYPE AND MUTANT ALA-84 IN COMPLEX WITH HEME AND CALCITRIOL</scope>
    <scope>FUNCTION</scope>
    <scope>CATALYTIC ACTIVITY</scope>
    <scope>BIOPHYSICOCHEMICAL PROPERTIES</scope>
    <scope>MUTAGENESIS OF ARG-73; ARG-84; VAL-88; LEU-180; VAL-181; ARG-193 AND ILE-293</scope>
    <scope>COFACTOR</scope>
</reference>
<reference key="4">
    <citation type="journal article" date="2008" name="Biochemistry">
        <title>Structure-based design of a highly active vitamin D hydroxylase from Streptomyces griseolus CYP105A1.</title>
        <authorList>
            <person name="Hayashi K."/>
            <person name="Sugimoto H."/>
            <person name="Shinkyo R."/>
            <person name="Yamada M."/>
            <person name="Ikeda S."/>
            <person name="Ikushiro S."/>
            <person name="Kamakura M."/>
            <person name="Shiro Y."/>
            <person name="Sakaki T."/>
        </authorList>
    </citation>
    <scope>X-RAY CRYSTALLOGRAPHY (1.70 ANGSTROMS) OF MUTANT PHE-84 AND DOUBLE MUTANT ALA-73/ALA-84 IN COMPLEX WITH HEME AND CALCITRIOL</scope>
    <scope>FUNCTION</scope>
    <scope>CATALYTIC ACTIVITY</scope>
    <scope>BIOPHYSICOCHEMICAL PROPERTIES</scope>
    <scope>MUTAGENESIS OF ARG-73 AND ARG-84</scope>
    <scope>COFACTOR</scope>
</reference>
<sequence>MTDTATTPQTTDAPAFPSNRSCPYQLPDGYAQLRDTPGPLHRVTLYDGRQAWVVTKHEAARKLLGDPRLSSNRTDDNFPATSPRFEAVRESPQAFIGLDPPEHGTRRRMTISEFTVKRIKGMRPEVEEVVHGFLDEMLAAGPTADLVSQFALPVPSMVICRLLGVPYADHEFFQDASKRLVQSTDAQSALTARNDLAGYLDGLITQFQTEPGAGLVGALVADQLANGEIDREELISTAMLLLIAGHETTASMTSLSVITLLDHPEQYAALRADRSLVPGAVEELLRYLAIADIAGGRVATADIEVEGHLIRAGEGVIVVNSIANRDGTVYEDPDALDIHRSARHHLAFGFGVHQCLGQNLARLELEVILNALMDRVPTLRLAVPVEQLVLRPGTTIQGVNELPVTW</sequence>
<keyword id="KW-0002">3D-structure</keyword>
<keyword id="KW-0963">Cytoplasm</keyword>
<keyword id="KW-0903">Direct protein sequencing</keyword>
<keyword id="KW-0349">Heme</keyword>
<keyword id="KW-0408">Iron</keyword>
<keyword id="KW-0479">Metal-binding</keyword>
<keyword id="KW-0503">Monooxygenase</keyword>
<keyword id="KW-0560">Oxidoreductase</keyword>
<protein>
    <recommendedName>
        <fullName evidence="8">Vitamin D3 dihydroxylase</fullName>
        <ecNumber evidence="2 3 4">1.14.15.22</ecNumber>
    </recommendedName>
    <alternativeName>
        <fullName evidence="7">CYP105A1</fullName>
    </alternativeName>
    <alternativeName>
        <fullName evidence="7">Cytochrome P450-CVA1</fullName>
    </alternativeName>
    <alternativeName>
        <fullName evidence="7">Cytochrome P450-SU1</fullName>
    </alternativeName>
    <alternativeName>
        <fullName evidence="6">Vitamin D3 hydroxylase</fullName>
        <shortName evidence="6">VD3 hydroxylase</shortName>
    </alternativeName>
</protein>
<accession>P18326</accession>